<organism>
    <name type="scientific">Pedosphaera parvula (strain Ellin514)</name>
    <dbReference type="NCBI Taxonomy" id="320771"/>
    <lineage>
        <taxon>Bacteria</taxon>
        <taxon>Pseudomonadati</taxon>
        <taxon>Verrucomicrobiota</taxon>
        <taxon>Verrucomicrobiia</taxon>
        <taxon>Limisphaerales</taxon>
        <taxon>Limisphaerales incertae sedis</taxon>
        <taxon>Pedosphaera</taxon>
    </lineage>
</organism>
<gene>
    <name type="ORF">Cflav_PD4758</name>
</gene>
<sequence>MQIKFWPQDLKLAHTWTIASSVTSGSDVTSVGIVQLTDRDGTVGLGEAAPARRYNESTPGSLDFIAKVDATKLSFDNIEASMKYVESLASGQFAAKSAINVALLDGAARKAGKPIYDLLGLGFRNNHHVTSFSIGIDKADVIRKKVLAAEQYPVLKLKVGAADDKANLAALREAAPQKWVRVDANEGWKTKEHALEMIEWLAQDKFIQYIEQPMPADSNPKDIAWLKARSPLPLFGDESYHTAKDVDHCAECYHGVNVKLCKTGGISNAYEALQVARKAGLKTMIGCMIETSILISAAAHLAELCDYLDIDGNLLTTNDPYLGVTAEKGLLSFASAPEKLGLRVRAK</sequence>
<evidence type="ECO:0000250" key="1"/>
<evidence type="ECO:0000269" key="2">
    <source>
    </source>
</evidence>
<evidence type="ECO:0000305" key="3"/>
<feature type="chain" id="PRO_0000429651" description="L-Ala-D/L-amino acid epimerase">
    <location>
        <begin position="1"/>
        <end position="347"/>
    </location>
</feature>
<feature type="binding site" evidence="1">
    <location>
        <begin position="156"/>
        <end position="158"/>
    </location>
    <ligand>
        <name>substrate</name>
    </ligand>
</feature>
<feature type="binding site" evidence="1">
    <location>
        <position position="183"/>
    </location>
    <ligand>
        <name>Mg(2+)</name>
        <dbReference type="ChEBI" id="CHEBI:18420"/>
    </ligand>
</feature>
<feature type="binding site" evidence="1">
    <location>
        <position position="211"/>
    </location>
    <ligand>
        <name>Mg(2+)</name>
        <dbReference type="ChEBI" id="CHEBI:18420"/>
    </ligand>
</feature>
<feature type="binding site" evidence="1">
    <location>
        <position position="237"/>
    </location>
    <ligand>
        <name>Mg(2+)</name>
        <dbReference type="ChEBI" id="CHEBI:18420"/>
    </ligand>
</feature>
<feature type="binding site" evidence="1">
    <location>
        <position position="259"/>
    </location>
    <ligand>
        <name>substrate</name>
    </ligand>
</feature>
<feature type="binding site" evidence="1">
    <location>
        <begin position="309"/>
        <end position="311"/>
    </location>
    <ligand>
        <name>substrate</name>
    </ligand>
</feature>
<dbReference type="EC" id="5.1.1.-"/>
<dbReference type="EMBL" id="ABOX02000008">
    <property type="protein sequence ID" value="EEF61718.1"/>
    <property type="molecule type" value="Genomic_DNA"/>
</dbReference>
<dbReference type="RefSeq" id="WP_007414252.1">
    <property type="nucleotide sequence ID" value="NZ_ABOX02000008.1"/>
</dbReference>
<dbReference type="SMR" id="B9XEK4"/>
<dbReference type="STRING" id="320771.Cflav_PD4758"/>
<dbReference type="Proteomes" id="UP000003688">
    <property type="component" value="Unassembled WGS sequence"/>
</dbReference>
<dbReference type="GO" id="GO:0046872">
    <property type="term" value="F:metal ion binding"/>
    <property type="evidence" value="ECO:0007669"/>
    <property type="project" value="UniProtKB-KW"/>
</dbReference>
<dbReference type="GO" id="GO:0016855">
    <property type="term" value="F:racemase and epimerase activity, acting on amino acids and derivatives"/>
    <property type="evidence" value="ECO:0007669"/>
    <property type="project" value="InterPro"/>
</dbReference>
<dbReference type="CDD" id="cd03319">
    <property type="entry name" value="L-Ala-DL-Glu_epimerase"/>
    <property type="match status" value="1"/>
</dbReference>
<dbReference type="Gene3D" id="3.20.20.120">
    <property type="entry name" value="Enolase-like C-terminal domain"/>
    <property type="match status" value="1"/>
</dbReference>
<dbReference type="Gene3D" id="3.30.390.10">
    <property type="entry name" value="Enolase-like, N-terminal domain"/>
    <property type="match status" value="1"/>
</dbReference>
<dbReference type="InterPro" id="IPR034593">
    <property type="entry name" value="DgoD-like"/>
</dbReference>
<dbReference type="InterPro" id="IPR034603">
    <property type="entry name" value="Dipeptide_epimerase"/>
</dbReference>
<dbReference type="InterPro" id="IPR036849">
    <property type="entry name" value="Enolase-like_C_sf"/>
</dbReference>
<dbReference type="InterPro" id="IPR029017">
    <property type="entry name" value="Enolase-like_N"/>
</dbReference>
<dbReference type="InterPro" id="IPR029065">
    <property type="entry name" value="Enolase_C-like"/>
</dbReference>
<dbReference type="InterPro" id="IPR013342">
    <property type="entry name" value="Mandelate_racemase_C"/>
</dbReference>
<dbReference type="InterPro" id="IPR013341">
    <property type="entry name" value="Mandelate_racemase_N_dom"/>
</dbReference>
<dbReference type="PANTHER" id="PTHR48080">
    <property type="entry name" value="D-GALACTONATE DEHYDRATASE-RELATED"/>
    <property type="match status" value="1"/>
</dbReference>
<dbReference type="PANTHER" id="PTHR48080:SF3">
    <property type="entry name" value="ENOLASE SUPERFAMILY MEMBER DDB_G0284701"/>
    <property type="match status" value="1"/>
</dbReference>
<dbReference type="Pfam" id="PF13378">
    <property type="entry name" value="MR_MLE_C"/>
    <property type="match status" value="1"/>
</dbReference>
<dbReference type="Pfam" id="PF02746">
    <property type="entry name" value="MR_MLE_N"/>
    <property type="match status" value="1"/>
</dbReference>
<dbReference type="SFLD" id="SFLDS00001">
    <property type="entry name" value="Enolase"/>
    <property type="match status" value="1"/>
</dbReference>
<dbReference type="SFLD" id="SFLDG00180">
    <property type="entry name" value="muconate_cycloisomerase"/>
    <property type="match status" value="1"/>
</dbReference>
<dbReference type="SMART" id="SM00922">
    <property type="entry name" value="MR_MLE"/>
    <property type="match status" value="1"/>
</dbReference>
<dbReference type="SUPFAM" id="SSF51604">
    <property type="entry name" value="Enolase C-terminal domain-like"/>
    <property type="match status" value="1"/>
</dbReference>
<dbReference type="SUPFAM" id="SSF54826">
    <property type="entry name" value="Enolase N-terminal domain-like"/>
    <property type="match status" value="1"/>
</dbReference>
<proteinExistence type="inferred from homology"/>
<name>AXEP_PEDPL</name>
<reference key="1">
    <citation type="journal article" date="2011" name="J. Bacteriol.">
        <title>Genome sequence of 'Pedosphaera parvula' Ellin514, an aerobic Verrucomicrobial isolate from pasture soil.</title>
        <authorList>
            <person name="Kant R."/>
            <person name="van Passel M.W."/>
            <person name="Sangwan P."/>
            <person name="Palva A."/>
            <person name="Lucas S."/>
            <person name="Copeland A."/>
            <person name="Lapidus A."/>
            <person name="Glavina Del Rio T."/>
            <person name="Dalin E."/>
            <person name="Tice H."/>
            <person name="Bruce D."/>
            <person name="Goodwin L."/>
            <person name="Pitluck S."/>
            <person name="Chertkov O."/>
            <person name="Larimer F.W."/>
            <person name="Land M.L."/>
            <person name="Hauser L."/>
            <person name="Brettin T.S."/>
            <person name="Detter J.C."/>
            <person name="Han S."/>
            <person name="de Vos W.M."/>
            <person name="Janssen P.H."/>
            <person name="Smidt H."/>
        </authorList>
    </citation>
    <scope>NUCLEOTIDE SEQUENCE [LARGE SCALE GENOMIC DNA]</scope>
    <source>
        <strain>Ellin514</strain>
    </source>
</reference>
<reference key="2">
    <citation type="journal article" date="2012" name="Proc. Natl. Acad. Sci. U.S.A.">
        <title>Homology models guide discovery of diverse enzyme specificities among dipeptide epimerases in the enolase superfamily.</title>
        <authorList>
            <person name="Lukk T."/>
            <person name="Sakai A."/>
            <person name="Kalyanaraman C."/>
            <person name="Brown S.D."/>
            <person name="Imker H.J."/>
            <person name="Song L."/>
            <person name="Fedorov A.A."/>
            <person name="Fedorov E.V."/>
            <person name="Toro R."/>
            <person name="Hillerich B."/>
            <person name="Seidel R."/>
            <person name="Patskovsky Y."/>
            <person name="Vetting M.W."/>
            <person name="Nair S.K."/>
            <person name="Babbitt P.C."/>
            <person name="Almo S.C."/>
            <person name="Gerlt J.A."/>
            <person name="Jacobson M.P."/>
        </authorList>
    </citation>
    <scope>FUNCTION</scope>
    <scope>COFACTOR</scope>
    <source>
        <strain>Ellin514</strain>
    </source>
</reference>
<accession>B9XEK4</accession>
<comment type="function">
    <text evidence="2">Dipeptide epimerase with a broad substrate specificity. Catalyzes the epimerization of L-Ala-L-Ala, L-Ala-L-Ser, L-Ala-L-Thr, L-Ala-L-Met, L-Ala-L-Phe, L-Ala-L-Tyr, L-Gly-L-Asp, L-Val-L-Asp, L-Val-L-Glu and L-Val-L-Phe (in vitro). Can also catalyze the epimerization of L-Ala-L-Glu, but with lower efficiency.</text>
</comment>
<comment type="cofactor">
    <cofactor evidence="2">
        <name>Mg(2+)</name>
        <dbReference type="ChEBI" id="CHEBI:18420"/>
    </cofactor>
    <text evidence="2">Binds 1 Mg(2+) ion per subunit.</text>
</comment>
<comment type="miscellaneous">
    <text>Part of a large, functionally divergent protein family. Protein modeling and substrate docking were used to predict the substrate specificity, prior to biochemical analysis.</text>
</comment>
<comment type="similarity">
    <text evidence="3">Belongs to the mandelate racemase/muconate lactonizing enzyme family.</text>
</comment>
<protein>
    <recommendedName>
        <fullName>L-Ala-D/L-amino acid epimerase</fullName>
        <ecNumber>5.1.1.-</ecNumber>
    </recommendedName>
</protein>
<keyword id="KW-0413">Isomerase</keyword>
<keyword id="KW-0460">Magnesium</keyword>
<keyword id="KW-0479">Metal-binding</keyword>
<keyword id="KW-1185">Reference proteome</keyword>